<reference key="1">
    <citation type="journal article" date="2005" name="Science">
        <title>The transcriptional landscape of the mammalian genome.</title>
        <authorList>
            <person name="Carninci P."/>
            <person name="Kasukawa T."/>
            <person name="Katayama S."/>
            <person name="Gough J."/>
            <person name="Frith M.C."/>
            <person name="Maeda N."/>
            <person name="Oyama R."/>
            <person name="Ravasi T."/>
            <person name="Lenhard B."/>
            <person name="Wells C."/>
            <person name="Kodzius R."/>
            <person name="Shimokawa K."/>
            <person name="Bajic V.B."/>
            <person name="Brenner S.E."/>
            <person name="Batalov S."/>
            <person name="Forrest A.R."/>
            <person name="Zavolan M."/>
            <person name="Davis M.J."/>
            <person name="Wilming L.G."/>
            <person name="Aidinis V."/>
            <person name="Allen J.E."/>
            <person name="Ambesi-Impiombato A."/>
            <person name="Apweiler R."/>
            <person name="Aturaliya R.N."/>
            <person name="Bailey T.L."/>
            <person name="Bansal M."/>
            <person name="Baxter L."/>
            <person name="Beisel K.W."/>
            <person name="Bersano T."/>
            <person name="Bono H."/>
            <person name="Chalk A.M."/>
            <person name="Chiu K.P."/>
            <person name="Choudhary V."/>
            <person name="Christoffels A."/>
            <person name="Clutterbuck D.R."/>
            <person name="Crowe M.L."/>
            <person name="Dalla E."/>
            <person name="Dalrymple B.P."/>
            <person name="de Bono B."/>
            <person name="Della Gatta G."/>
            <person name="di Bernardo D."/>
            <person name="Down T."/>
            <person name="Engstrom P."/>
            <person name="Fagiolini M."/>
            <person name="Faulkner G."/>
            <person name="Fletcher C.F."/>
            <person name="Fukushima T."/>
            <person name="Furuno M."/>
            <person name="Futaki S."/>
            <person name="Gariboldi M."/>
            <person name="Georgii-Hemming P."/>
            <person name="Gingeras T.R."/>
            <person name="Gojobori T."/>
            <person name="Green R.E."/>
            <person name="Gustincich S."/>
            <person name="Harbers M."/>
            <person name="Hayashi Y."/>
            <person name="Hensch T.K."/>
            <person name="Hirokawa N."/>
            <person name="Hill D."/>
            <person name="Huminiecki L."/>
            <person name="Iacono M."/>
            <person name="Ikeo K."/>
            <person name="Iwama A."/>
            <person name="Ishikawa T."/>
            <person name="Jakt M."/>
            <person name="Kanapin A."/>
            <person name="Katoh M."/>
            <person name="Kawasawa Y."/>
            <person name="Kelso J."/>
            <person name="Kitamura H."/>
            <person name="Kitano H."/>
            <person name="Kollias G."/>
            <person name="Krishnan S.P."/>
            <person name="Kruger A."/>
            <person name="Kummerfeld S.K."/>
            <person name="Kurochkin I.V."/>
            <person name="Lareau L.F."/>
            <person name="Lazarevic D."/>
            <person name="Lipovich L."/>
            <person name="Liu J."/>
            <person name="Liuni S."/>
            <person name="McWilliam S."/>
            <person name="Madan Babu M."/>
            <person name="Madera M."/>
            <person name="Marchionni L."/>
            <person name="Matsuda H."/>
            <person name="Matsuzawa S."/>
            <person name="Miki H."/>
            <person name="Mignone F."/>
            <person name="Miyake S."/>
            <person name="Morris K."/>
            <person name="Mottagui-Tabar S."/>
            <person name="Mulder N."/>
            <person name="Nakano N."/>
            <person name="Nakauchi H."/>
            <person name="Ng P."/>
            <person name="Nilsson R."/>
            <person name="Nishiguchi S."/>
            <person name="Nishikawa S."/>
            <person name="Nori F."/>
            <person name="Ohara O."/>
            <person name="Okazaki Y."/>
            <person name="Orlando V."/>
            <person name="Pang K.C."/>
            <person name="Pavan W.J."/>
            <person name="Pavesi G."/>
            <person name="Pesole G."/>
            <person name="Petrovsky N."/>
            <person name="Piazza S."/>
            <person name="Reed J."/>
            <person name="Reid J.F."/>
            <person name="Ring B.Z."/>
            <person name="Ringwald M."/>
            <person name="Rost B."/>
            <person name="Ruan Y."/>
            <person name="Salzberg S.L."/>
            <person name="Sandelin A."/>
            <person name="Schneider C."/>
            <person name="Schoenbach C."/>
            <person name="Sekiguchi K."/>
            <person name="Semple C.A."/>
            <person name="Seno S."/>
            <person name="Sessa L."/>
            <person name="Sheng Y."/>
            <person name="Shibata Y."/>
            <person name="Shimada H."/>
            <person name="Shimada K."/>
            <person name="Silva D."/>
            <person name="Sinclair B."/>
            <person name="Sperling S."/>
            <person name="Stupka E."/>
            <person name="Sugiura K."/>
            <person name="Sultana R."/>
            <person name="Takenaka Y."/>
            <person name="Taki K."/>
            <person name="Tammoja K."/>
            <person name="Tan S.L."/>
            <person name="Tang S."/>
            <person name="Taylor M.S."/>
            <person name="Tegner J."/>
            <person name="Teichmann S.A."/>
            <person name="Ueda H.R."/>
            <person name="van Nimwegen E."/>
            <person name="Verardo R."/>
            <person name="Wei C.L."/>
            <person name="Yagi K."/>
            <person name="Yamanishi H."/>
            <person name="Zabarovsky E."/>
            <person name="Zhu S."/>
            <person name="Zimmer A."/>
            <person name="Hide W."/>
            <person name="Bult C."/>
            <person name="Grimmond S.M."/>
            <person name="Teasdale R.D."/>
            <person name="Liu E.T."/>
            <person name="Brusic V."/>
            <person name="Quackenbush J."/>
            <person name="Wahlestedt C."/>
            <person name="Mattick J.S."/>
            <person name="Hume D.A."/>
            <person name="Kai C."/>
            <person name="Sasaki D."/>
            <person name="Tomaru Y."/>
            <person name="Fukuda S."/>
            <person name="Kanamori-Katayama M."/>
            <person name="Suzuki M."/>
            <person name="Aoki J."/>
            <person name="Arakawa T."/>
            <person name="Iida J."/>
            <person name="Imamura K."/>
            <person name="Itoh M."/>
            <person name="Kato T."/>
            <person name="Kawaji H."/>
            <person name="Kawagashira N."/>
            <person name="Kawashima T."/>
            <person name="Kojima M."/>
            <person name="Kondo S."/>
            <person name="Konno H."/>
            <person name="Nakano K."/>
            <person name="Ninomiya N."/>
            <person name="Nishio T."/>
            <person name="Okada M."/>
            <person name="Plessy C."/>
            <person name="Shibata K."/>
            <person name="Shiraki T."/>
            <person name="Suzuki S."/>
            <person name="Tagami M."/>
            <person name="Waki K."/>
            <person name="Watahiki A."/>
            <person name="Okamura-Oho Y."/>
            <person name="Suzuki H."/>
            <person name="Kawai J."/>
            <person name="Hayashizaki Y."/>
        </authorList>
    </citation>
    <scope>NUCLEOTIDE SEQUENCE [LARGE SCALE MRNA]</scope>
    <source>
        <strain>C57BL/6J</strain>
        <strain>NOD</strain>
        <tissue>Bone marrow</tissue>
        <tissue>Embryo</tissue>
        <tissue>Placenta</tissue>
        <tissue>Testis</tissue>
        <tissue>Thymus</tissue>
    </source>
</reference>
<reference key="2">
    <citation type="journal article" date="2004" name="Genome Res.">
        <title>The status, quality, and expansion of the NIH full-length cDNA project: the Mammalian Gene Collection (MGC).</title>
        <authorList>
            <consortium name="The MGC Project Team"/>
        </authorList>
    </citation>
    <scope>NUCLEOTIDE SEQUENCE [LARGE SCALE MRNA]</scope>
    <source>
        <strain>C57BL/6J</strain>
        <tissue>Embryo</tissue>
    </source>
</reference>
<reference key="3">
    <citation type="journal article" date="2007" name="Biochem. Biophys. Res. Commun.">
        <title>Characterization of hampin/MSL1 as a node in the nuclear interactome.</title>
        <authorList>
            <person name="Dmitriev R.I."/>
            <person name="Korneenko T.V."/>
            <person name="Bessonov A.A."/>
            <person name="Shakhparonov M.I."/>
            <person name="Modyanov N.N."/>
            <person name="Pestov N.B."/>
        </authorList>
    </citation>
    <scope>INTERACTION WITH MSL1</scope>
    <scope>SUBCELLULAR LOCATION</scope>
</reference>
<reference key="4">
    <citation type="journal article" date="2010" name="Cell">
        <title>A tissue-specific atlas of mouse protein phosphorylation and expression.</title>
        <authorList>
            <person name="Huttlin E.L."/>
            <person name="Jedrychowski M.P."/>
            <person name="Elias J.E."/>
            <person name="Goswami T."/>
            <person name="Rad R."/>
            <person name="Beausoleil S.A."/>
            <person name="Villen J."/>
            <person name="Haas W."/>
            <person name="Sowa M.E."/>
            <person name="Gygi S.P."/>
        </authorList>
    </citation>
    <scope>IDENTIFICATION BY MASS SPECTROMETRY [LARGE SCALE ANALYSIS]</scope>
    <source>
        <tissue>Pancreas</tissue>
        <tissue>Spleen</tissue>
        <tissue>Testis</tissue>
    </source>
</reference>
<reference key="5">
    <citation type="journal article" date="2014" name="Structure">
        <title>Structural basis for phosphorylation-dependent recruitment of Tel2 to Hsp90 by Pih1.</title>
        <authorList>
            <person name="Pal M."/>
            <person name="Morgan M."/>
            <person name="Phelps S.E."/>
            <person name="Roe S.M."/>
            <person name="Parry-Morris S."/>
            <person name="Downs J.A."/>
            <person name="Polier S."/>
            <person name="Pearl L.H."/>
            <person name="Prodromou C."/>
        </authorList>
    </citation>
    <scope>X-RAY CRYSTALLOGRAPHY (1.9 ANGSTROMS) OF 47-179 IN COMPLEX WITH TELO2 PHOSPHOPEPTIDE</scope>
    <scope>INTERACTION WITH TELO2</scope>
    <scope>MUTAGENESIS OF LYS-57; LYS-64 AND LYS-153</scope>
</reference>
<organism>
    <name type="scientific">Mus musculus</name>
    <name type="common">Mouse</name>
    <dbReference type="NCBI Taxonomy" id="10090"/>
    <lineage>
        <taxon>Eukaryota</taxon>
        <taxon>Metazoa</taxon>
        <taxon>Chordata</taxon>
        <taxon>Craniata</taxon>
        <taxon>Vertebrata</taxon>
        <taxon>Euteleostomi</taxon>
        <taxon>Mammalia</taxon>
        <taxon>Eutheria</taxon>
        <taxon>Euarchontoglires</taxon>
        <taxon>Glires</taxon>
        <taxon>Rodentia</taxon>
        <taxon>Myomorpha</taxon>
        <taxon>Muroidea</taxon>
        <taxon>Muridae</taxon>
        <taxon>Murinae</taxon>
        <taxon>Mus</taxon>
        <taxon>Mus</taxon>
    </lineage>
</organism>
<keyword id="KW-0002">3D-structure</keyword>
<keyword id="KW-0539">Nucleus</keyword>
<keyword id="KW-0597">Phosphoprotein</keyword>
<keyword id="KW-1185">Reference proteome</keyword>
<keyword id="KW-0804">Transcription</keyword>
<keyword id="KW-0805">Transcription regulation</keyword>
<gene>
    <name type="primary">Pih1d1</name>
    <name type="synonym">Nop17</name>
</gene>
<accession>Q9CQJ2</accession>
<accession>Q6NV90</accession>
<feature type="chain" id="PRO_0000307329" description="PIH1 domain-containing protein 1">
    <location>
        <begin position="1"/>
        <end position="290"/>
    </location>
</feature>
<feature type="site" description="Interacts with TELO2" evidence="4">
    <location>
        <position position="57"/>
    </location>
</feature>
<feature type="site" description="Interacts with TELO2" evidence="4">
    <location>
        <position position="64"/>
    </location>
</feature>
<feature type="site" description="Interacts with TELO2" evidence="4">
    <location>
        <position position="113"/>
    </location>
</feature>
<feature type="modified residue" description="Phosphoserine" evidence="1">
    <location>
        <position position="12"/>
    </location>
</feature>
<feature type="modified residue" description="Phosphoserine" evidence="1">
    <location>
        <position position="16"/>
    </location>
</feature>
<feature type="modified residue" description="Phosphoserine" evidence="2">
    <location>
        <position position="173"/>
    </location>
</feature>
<feature type="mutagenesis site" description="Abolishes binding to TELO2-phosphopeptide." evidence="4">
    <original>K</original>
    <variation>E</variation>
    <location>
        <position position="57"/>
    </location>
</feature>
<feature type="mutagenesis site" description="Abolishes binding to TELO2-phosphopeptide." evidence="4">
    <original>K</original>
    <variation>E</variation>
    <location>
        <position position="64"/>
    </location>
</feature>
<feature type="mutagenesis site" description="No effect on binding to TELO2-phosphopeptide." evidence="4">
    <original>K</original>
    <variation>E</variation>
    <location>
        <position position="153"/>
    </location>
</feature>
<feature type="sequence conflict" description="In Ref. 2; AAH68254." evidence="5" ref="2">
    <original>S</original>
    <variation>P</variation>
    <location>
        <position position="289"/>
    </location>
</feature>
<feature type="strand" evidence="7">
    <location>
        <begin position="51"/>
        <end position="58"/>
    </location>
</feature>
<feature type="strand" evidence="7">
    <location>
        <begin position="65"/>
        <end position="72"/>
    </location>
</feature>
<feature type="helix" evidence="7">
    <location>
        <begin position="83"/>
        <end position="91"/>
    </location>
</feature>
<feature type="helix" evidence="7">
    <location>
        <begin position="95"/>
        <end position="98"/>
    </location>
</feature>
<feature type="strand" evidence="7">
    <location>
        <begin position="107"/>
        <end position="110"/>
    </location>
</feature>
<feature type="strand" evidence="6">
    <location>
        <begin position="112"/>
        <end position="114"/>
    </location>
</feature>
<feature type="strand" evidence="7">
    <location>
        <begin position="116"/>
        <end position="125"/>
    </location>
</feature>
<feature type="helix" evidence="7">
    <location>
        <begin position="126"/>
        <end position="133"/>
    </location>
</feature>
<feature type="helix" evidence="7">
    <location>
        <begin position="136"/>
        <end position="154"/>
    </location>
</feature>
<feature type="helix" evidence="7">
    <location>
        <begin position="174"/>
        <end position="176"/>
    </location>
</feature>
<dbReference type="EMBL" id="AK004341">
    <property type="protein sequence ID" value="BAB23269.1"/>
    <property type="molecule type" value="mRNA"/>
</dbReference>
<dbReference type="EMBL" id="AK016797">
    <property type="protein sequence ID" value="BAB30435.1"/>
    <property type="molecule type" value="mRNA"/>
</dbReference>
<dbReference type="EMBL" id="AK089003">
    <property type="protein sequence ID" value="BAC40694.1"/>
    <property type="molecule type" value="mRNA"/>
</dbReference>
<dbReference type="EMBL" id="AK146039">
    <property type="protein sequence ID" value="BAE26851.1"/>
    <property type="molecule type" value="mRNA"/>
</dbReference>
<dbReference type="EMBL" id="AK152695">
    <property type="protein sequence ID" value="BAE31425.1"/>
    <property type="molecule type" value="mRNA"/>
</dbReference>
<dbReference type="EMBL" id="BC068254">
    <property type="protein sequence ID" value="AAH68254.1"/>
    <property type="molecule type" value="mRNA"/>
</dbReference>
<dbReference type="CCDS" id="CCDS21232.1"/>
<dbReference type="RefSeq" id="NP_001265136.1">
    <property type="nucleotide sequence ID" value="NM_001278207.1"/>
</dbReference>
<dbReference type="RefSeq" id="NP_001272833.1">
    <property type="nucleotide sequence ID" value="NM_001285904.2"/>
</dbReference>
<dbReference type="RefSeq" id="NP_083682.1">
    <property type="nucleotide sequence ID" value="NM_029406.4"/>
</dbReference>
<dbReference type="RefSeq" id="XP_006541219.1">
    <property type="nucleotide sequence ID" value="XM_006541156.2"/>
</dbReference>
<dbReference type="RefSeq" id="XP_017167766.1">
    <property type="nucleotide sequence ID" value="XM_017312277.1"/>
</dbReference>
<dbReference type="RefSeq" id="XP_036009299.1">
    <property type="nucleotide sequence ID" value="XM_036153406.1"/>
</dbReference>
<dbReference type="PDB" id="4CKT">
    <property type="method" value="X-ray"/>
    <property type="resolution" value="3.00 A"/>
    <property type="chains" value="A/B=1-200"/>
</dbReference>
<dbReference type="PDB" id="4CSE">
    <property type="method" value="X-ray"/>
    <property type="resolution" value="3.30 A"/>
    <property type="chains" value="A/B=47-179"/>
</dbReference>
<dbReference type="PDB" id="4CV4">
    <property type="method" value="X-ray"/>
    <property type="resolution" value="1.90 A"/>
    <property type="chains" value="A=47-179"/>
</dbReference>
<dbReference type="PDBsum" id="4CKT"/>
<dbReference type="PDBsum" id="4CSE"/>
<dbReference type="PDBsum" id="4CV4"/>
<dbReference type="SMR" id="Q9CQJ2"/>
<dbReference type="BioGRID" id="213080">
    <property type="interactions" value="4"/>
</dbReference>
<dbReference type="DIP" id="DIP-60996N"/>
<dbReference type="FunCoup" id="Q9CQJ2">
    <property type="interactions" value="1231"/>
</dbReference>
<dbReference type="IntAct" id="Q9CQJ2">
    <property type="interactions" value="5"/>
</dbReference>
<dbReference type="MINT" id="Q9CQJ2"/>
<dbReference type="STRING" id="10090.ENSMUSP00000082490"/>
<dbReference type="GlyGen" id="Q9CQJ2">
    <property type="glycosylation" value="1 site, 1 N-linked glycan (1 site)"/>
</dbReference>
<dbReference type="iPTMnet" id="Q9CQJ2"/>
<dbReference type="PhosphoSitePlus" id="Q9CQJ2"/>
<dbReference type="SwissPalm" id="Q9CQJ2"/>
<dbReference type="jPOST" id="Q9CQJ2"/>
<dbReference type="PaxDb" id="10090-ENSMUSP00000082490"/>
<dbReference type="PeptideAtlas" id="Q9CQJ2"/>
<dbReference type="ProteomicsDB" id="289423"/>
<dbReference type="Pumba" id="Q9CQJ2"/>
<dbReference type="Antibodypedia" id="32006">
    <property type="antibodies" value="235 antibodies from 24 providers"/>
</dbReference>
<dbReference type="DNASU" id="68845"/>
<dbReference type="Ensembl" id="ENSMUST00000085375.13">
    <property type="protein sequence ID" value="ENSMUSP00000082490.6"/>
    <property type="gene ID" value="ENSMUSG00000003423.16"/>
</dbReference>
<dbReference type="Ensembl" id="ENSMUST00000107811.4">
    <property type="protein sequence ID" value="ENSMUSP00000103441.2"/>
    <property type="gene ID" value="ENSMUSG00000003423.16"/>
</dbReference>
<dbReference type="Ensembl" id="ENSMUST00000210139.2">
    <property type="protein sequence ID" value="ENSMUSP00000148186.2"/>
    <property type="gene ID" value="ENSMUSG00000003423.16"/>
</dbReference>
<dbReference type="GeneID" id="68845"/>
<dbReference type="KEGG" id="mmu:68845"/>
<dbReference type="UCSC" id="uc009gtv.1">
    <property type="organism name" value="mouse"/>
</dbReference>
<dbReference type="AGR" id="MGI:1916095"/>
<dbReference type="CTD" id="55011"/>
<dbReference type="MGI" id="MGI:1916095">
    <property type="gene designation" value="Pih1d1"/>
</dbReference>
<dbReference type="VEuPathDB" id="HostDB:ENSMUSG00000003423"/>
<dbReference type="eggNOG" id="KOG4356">
    <property type="taxonomic scope" value="Eukaryota"/>
</dbReference>
<dbReference type="GeneTree" id="ENSGT00510000048192"/>
<dbReference type="HOGENOM" id="CLU_062696_0_0_1"/>
<dbReference type="InParanoid" id="Q9CQJ2"/>
<dbReference type="OMA" id="KLKNRKC"/>
<dbReference type="OrthoDB" id="5135119at2759"/>
<dbReference type="PhylomeDB" id="Q9CQJ2"/>
<dbReference type="TreeFam" id="TF324376"/>
<dbReference type="BioGRID-ORCS" id="68845">
    <property type="hits" value="4 hits in 77 CRISPR screens"/>
</dbReference>
<dbReference type="ChiTaRS" id="Pih1d1">
    <property type="organism name" value="mouse"/>
</dbReference>
<dbReference type="EvolutionaryTrace" id="Q9CQJ2"/>
<dbReference type="PRO" id="PR:Q9CQJ2"/>
<dbReference type="Proteomes" id="UP000000589">
    <property type="component" value="Chromosome 7"/>
</dbReference>
<dbReference type="RNAct" id="Q9CQJ2">
    <property type="molecule type" value="protein"/>
</dbReference>
<dbReference type="Bgee" id="ENSMUSG00000003423">
    <property type="expression patterns" value="Expressed in spermatid and 260 other cell types or tissues"/>
</dbReference>
<dbReference type="ExpressionAtlas" id="Q9CQJ2">
    <property type="expression patterns" value="baseline and differential"/>
</dbReference>
<dbReference type="GO" id="GO:0005737">
    <property type="term" value="C:cytoplasm"/>
    <property type="evidence" value="ECO:0007669"/>
    <property type="project" value="Ensembl"/>
</dbReference>
<dbReference type="GO" id="GO:0005730">
    <property type="term" value="C:nucleolus"/>
    <property type="evidence" value="ECO:0007669"/>
    <property type="project" value="Ensembl"/>
</dbReference>
<dbReference type="GO" id="GO:0005634">
    <property type="term" value="C:nucleus"/>
    <property type="evidence" value="ECO:0000314"/>
    <property type="project" value="UniProtKB"/>
</dbReference>
<dbReference type="GO" id="GO:0070761">
    <property type="term" value="C:pre-snoRNP complex"/>
    <property type="evidence" value="ECO:0007669"/>
    <property type="project" value="Ensembl"/>
</dbReference>
<dbReference type="GO" id="GO:0097255">
    <property type="term" value="C:R2TP complex"/>
    <property type="evidence" value="ECO:0007669"/>
    <property type="project" value="Ensembl"/>
</dbReference>
<dbReference type="GO" id="GO:1990062">
    <property type="term" value="C:RPAP3/R2TP/prefoldin-like complex"/>
    <property type="evidence" value="ECO:0007669"/>
    <property type="project" value="Ensembl"/>
</dbReference>
<dbReference type="GO" id="GO:0051117">
    <property type="term" value="F:ATPase binding"/>
    <property type="evidence" value="ECO:0007669"/>
    <property type="project" value="Ensembl"/>
</dbReference>
<dbReference type="GO" id="GO:0042393">
    <property type="term" value="F:histone binding"/>
    <property type="evidence" value="ECO:0007669"/>
    <property type="project" value="Ensembl"/>
</dbReference>
<dbReference type="GO" id="GO:0140566">
    <property type="term" value="F:histone reader activity"/>
    <property type="evidence" value="ECO:0007669"/>
    <property type="project" value="Ensembl"/>
</dbReference>
<dbReference type="GO" id="GO:0051219">
    <property type="term" value="F:phosphoprotein binding"/>
    <property type="evidence" value="ECO:0007669"/>
    <property type="project" value="Ensembl"/>
</dbReference>
<dbReference type="GO" id="GO:0019901">
    <property type="term" value="F:protein kinase binding"/>
    <property type="evidence" value="ECO:0007669"/>
    <property type="project" value="Ensembl"/>
</dbReference>
<dbReference type="GO" id="GO:0000492">
    <property type="term" value="P:box C/D snoRNP assembly"/>
    <property type="evidence" value="ECO:0007669"/>
    <property type="project" value="Ensembl"/>
</dbReference>
<dbReference type="GO" id="GO:0006338">
    <property type="term" value="P:chromatin remodeling"/>
    <property type="evidence" value="ECO:0007669"/>
    <property type="project" value="Ensembl"/>
</dbReference>
<dbReference type="GO" id="GO:0030855">
    <property type="term" value="P:epithelial cell differentiation"/>
    <property type="evidence" value="ECO:0007669"/>
    <property type="project" value="Ensembl"/>
</dbReference>
<dbReference type="GO" id="GO:1902661">
    <property type="term" value="P:positive regulation of glucose mediated signaling pathway"/>
    <property type="evidence" value="ECO:0007669"/>
    <property type="project" value="Ensembl"/>
</dbReference>
<dbReference type="GO" id="GO:1904263">
    <property type="term" value="P:positive regulation of TORC1 signaling"/>
    <property type="evidence" value="ECO:0007669"/>
    <property type="project" value="Ensembl"/>
</dbReference>
<dbReference type="GO" id="GO:1901838">
    <property type="term" value="P:positive regulation of transcription of nucleolar large rRNA by RNA polymerase I"/>
    <property type="evidence" value="ECO:0007669"/>
    <property type="project" value="Ensembl"/>
</dbReference>
<dbReference type="GO" id="GO:0048254">
    <property type="term" value="P:snoRNA localization"/>
    <property type="evidence" value="ECO:0007669"/>
    <property type="project" value="Ensembl"/>
</dbReference>
<dbReference type="GO" id="GO:1905669">
    <property type="term" value="P:TORC1 complex assembly"/>
    <property type="evidence" value="ECO:0007669"/>
    <property type="project" value="Ensembl"/>
</dbReference>
<dbReference type="InterPro" id="IPR050734">
    <property type="entry name" value="PIH1/Kintoun_subfamily"/>
</dbReference>
<dbReference type="InterPro" id="IPR012981">
    <property type="entry name" value="PIH1_N"/>
</dbReference>
<dbReference type="InterPro" id="IPR041442">
    <property type="entry name" value="PIH1D1/2/3_CS-like"/>
</dbReference>
<dbReference type="PANTHER" id="PTHR22997">
    <property type="entry name" value="PIH1 DOMAIN-CONTAINING PROTEIN 1"/>
    <property type="match status" value="1"/>
</dbReference>
<dbReference type="PANTHER" id="PTHR22997:SF0">
    <property type="entry name" value="PIH1 DOMAIN-CONTAINING PROTEIN 1"/>
    <property type="match status" value="1"/>
</dbReference>
<dbReference type="Pfam" id="PF08190">
    <property type="entry name" value="PIH1"/>
    <property type="match status" value="1"/>
</dbReference>
<dbReference type="Pfam" id="PF18201">
    <property type="entry name" value="PIH1_CS"/>
    <property type="match status" value="1"/>
</dbReference>
<evidence type="ECO:0000250" key="1">
    <source>
        <dbReference type="UniProtKB" id="Q4V7F5"/>
    </source>
</evidence>
<evidence type="ECO:0000250" key="2">
    <source>
        <dbReference type="UniProtKB" id="Q9NWS0"/>
    </source>
</evidence>
<evidence type="ECO:0000269" key="3">
    <source>
    </source>
</evidence>
<evidence type="ECO:0000269" key="4">
    <source>
    </source>
</evidence>
<evidence type="ECO:0000305" key="5"/>
<evidence type="ECO:0007829" key="6">
    <source>
        <dbReference type="PDB" id="4CKT"/>
    </source>
</evidence>
<evidence type="ECO:0007829" key="7">
    <source>
        <dbReference type="PDB" id="4CV4"/>
    </source>
</evidence>
<sequence length="290" mass="32209">MADSTFLAPELSDTESMGEETVRFQELLLKASKELQQAQTARPDSTQIQPKPGFCVKTNSSEGKVFINICHSPSIPPPADVTEDELLQMLEEDQAGFRIPMSLGEPHAELDAKGQGCTAYDVAVNSNFYLRMQNSDFLRELVVTIAREGLEDKYGLQLNPEWRMLKYRSFLGSISQQNIRSQQRPRIQELGTLDASGSLGTCHGPERPHLNLWLEAPDLLLAEVDLPKLDGAQGLALEIGENRLVIGGPQQLYHLDATVPLRINSEASRAAFHRRRKQLMVSMPLLTASS</sequence>
<protein>
    <recommendedName>
        <fullName>PIH1 domain-containing protein 1</fullName>
    </recommendedName>
    <alternativeName>
        <fullName>Nucleolar protein 17 homolog</fullName>
    </alternativeName>
</protein>
<comment type="function">
    <text evidence="2">Involved in the assembly of C/D box small nucleolar ribonucleoprotein (snoRNP) particles (By similarity). Recruits the SWI/SNF complex to the core promoter of rRNA genes and enhances pre-rRNA transcription (By similarity). Mediates interaction of TELO2 with the R2TP complex which is necessary for the stability of MTOR and SMG1 (By similarity). Positively regulates the assembly and activity of the mTORC1 complex (By similarity).</text>
</comment>
<comment type="subunit">
    <text evidence="2 3 4">Component of the R2TP complex composed at least of RUVBL1, RUVBL2, RPAP3 and PIHD1 (By similarity). Component of the PAQosome complex which is responsible for the biogenesis of several protein complexes and which consists of R2TP complex members RUVBL1, RUVBL2, RPAP3 and PIH1D1, URI complex members PFDN2, PFDN6, PDRG1, UXT and URI1 as well as ASDURF, POLR2E and DNAAF10/WDR92 (By similarity). Interacts with phosphorylated TELO2 (PubMed:24794838). Mediates interaction of TELO2 with the R2TP complex (By similarity). Interacts with phosphorylated ECD, EFTUD2/SNRP116, RPB1 and UBR5 and with RPB1 in a phosphorylation-independent manner (By similarity). Interacts with the core C/D box snoRNP particle components NOP58 and FBL and with RUVBL1/TIP49 (By similarity). Interacts with RPAP3 and DNAAF10 (By similarity). Interacts with histone H4 and with SWI/SNF complex member SMARCB1/SNF5 (By similarity). Interacts with the mTORC1 complex member RPTOR (By similarity). Interacts with isoform 1 of MSL1 (PubMed:17335777).</text>
</comment>
<comment type="interaction">
    <interactant intactId="EBI-11658528">
        <id>Q9CQJ2</id>
    </interactant>
    <interactant intactId="EBI-1571482">
        <id>Q9DC40</id>
        <label>Telo2</label>
    </interactant>
    <organismsDiffer>false</organismsDiffer>
    <experiments>3</experiments>
</comment>
<comment type="subcellular location">
    <subcellularLocation>
        <location evidence="3">Nucleus</location>
    </subcellularLocation>
</comment>
<comment type="domain">
    <text evidence="2">The N-terminal region is required for binding to phosphorylated substrates while the C-terminal region binds to the other R2TP complex components.</text>
</comment>
<comment type="similarity">
    <text evidence="5">Belongs to the PIH1 family.</text>
</comment>
<proteinExistence type="evidence at protein level"/>
<name>PIHD1_MOUSE</name>